<accession>Q0AIB4</accession>
<reference key="1">
    <citation type="journal article" date="2007" name="Environ. Microbiol.">
        <title>Whole-genome analysis of the ammonia-oxidizing bacterium, Nitrosomonas eutropha C91: implications for niche adaptation.</title>
        <authorList>
            <person name="Stein L.Y."/>
            <person name="Arp D.J."/>
            <person name="Berube P.M."/>
            <person name="Chain P.S."/>
            <person name="Hauser L."/>
            <person name="Jetten M.S."/>
            <person name="Klotz M.G."/>
            <person name="Larimer F.W."/>
            <person name="Norton J.M."/>
            <person name="Op den Camp H.J.M."/>
            <person name="Shin M."/>
            <person name="Wei X."/>
        </authorList>
    </citation>
    <scope>NUCLEOTIDE SEQUENCE [LARGE SCALE GENOMIC DNA]</scope>
    <source>
        <strain>DSM 101675 / C91 / Nm57</strain>
    </source>
</reference>
<name>PYRD_NITEC</name>
<gene>
    <name evidence="1" type="primary">pyrD</name>
    <name type="ordered locus">Neut_0646</name>
</gene>
<feature type="chain" id="PRO_1000024192" description="Dihydroorotate dehydrogenase (quinone)">
    <location>
        <begin position="1"/>
        <end position="342"/>
    </location>
</feature>
<feature type="active site" description="Nucleophile" evidence="1">
    <location>
        <position position="173"/>
    </location>
</feature>
<feature type="binding site" evidence="1">
    <location>
        <begin position="60"/>
        <end position="64"/>
    </location>
    <ligand>
        <name>FMN</name>
        <dbReference type="ChEBI" id="CHEBI:58210"/>
    </ligand>
</feature>
<feature type="binding site" evidence="1">
    <location>
        <position position="64"/>
    </location>
    <ligand>
        <name>substrate</name>
    </ligand>
</feature>
<feature type="binding site" evidence="1">
    <location>
        <position position="84"/>
    </location>
    <ligand>
        <name>FMN</name>
        <dbReference type="ChEBI" id="CHEBI:58210"/>
    </ligand>
</feature>
<feature type="binding site" evidence="1">
    <location>
        <begin position="109"/>
        <end position="113"/>
    </location>
    <ligand>
        <name>substrate</name>
    </ligand>
</feature>
<feature type="binding site" evidence="1">
    <location>
        <position position="137"/>
    </location>
    <ligand>
        <name>FMN</name>
        <dbReference type="ChEBI" id="CHEBI:58210"/>
    </ligand>
</feature>
<feature type="binding site" evidence="1">
    <location>
        <position position="170"/>
    </location>
    <ligand>
        <name>FMN</name>
        <dbReference type="ChEBI" id="CHEBI:58210"/>
    </ligand>
</feature>
<feature type="binding site" evidence="1">
    <location>
        <position position="170"/>
    </location>
    <ligand>
        <name>substrate</name>
    </ligand>
</feature>
<feature type="binding site" evidence="1">
    <location>
        <position position="175"/>
    </location>
    <ligand>
        <name>substrate</name>
    </ligand>
</feature>
<feature type="binding site" evidence="1">
    <location>
        <position position="215"/>
    </location>
    <ligand>
        <name>FMN</name>
        <dbReference type="ChEBI" id="CHEBI:58210"/>
    </ligand>
</feature>
<feature type="binding site" evidence="1">
    <location>
        <position position="243"/>
    </location>
    <ligand>
        <name>FMN</name>
        <dbReference type="ChEBI" id="CHEBI:58210"/>
    </ligand>
</feature>
<feature type="binding site" evidence="1">
    <location>
        <begin position="244"/>
        <end position="245"/>
    </location>
    <ligand>
        <name>substrate</name>
    </ligand>
</feature>
<feature type="binding site" evidence="1">
    <location>
        <position position="266"/>
    </location>
    <ligand>
        <name>FMN</name>
        <dbReference type="ChEBI" id="CHEBI:58210"/>
    </ligand>
</feature>
<feature type="binding site" evidence="1">
    <location>
        <position position="295"/>
    </location>
    <ligand>
        <name>FMN</name>
        <dbReference type="ChEBI" id="CHEBI:58210"/>
    </ligand>
</feature>
<feature type="binding site" evidence="1">
    <location>
        <begin position="316"/>
        <end position="317"/>
    </location>
    <ligand>
        <name>FMN</name>
        <dbReference type="ChEBI" id="CHEBI:58210"/>
    </ligand>
</feature>
<dbReference type="EC" id="1.3.5.2" evidence="1"/>
<dbReference type="EMBL" id="CP000450">
    <property type="protein sequence ID" value="ABI58918.1"/>
    <property type="molecule type" value="Genomic_DNA"/>
</dbReference>
<dbReference type="RefSeq" id="WP_011633759.1">
    <property type="nucleotide sequence ID" value="NC_008344.1"/>
</dbReference>
<dbReference type="SMR" id="Q0AIB4"/>
<dbReference type="STRING" id="335283.Neut_0646"/>
<dbReference type="KEGG" id="net:Neut_0646"/>
<dbReference type="eggNOG" id="COG0167">
    <property type="taxonomic scope" value="Bacteria"/>
</dbReference>
<dbReference type="HOGENOM" id="CLU_013640_2_0_4"/>
<dbReference type="OrthoDB" id="9802377at2"/>
<dbReference type="UniPathway" id="UPA00070">
    <property type="reaction ID" value="UER00946"/>
</dbReference>
<dbReference type="Proteomes" id="UP000001966">
    <property type="component" value="Chromosome"/>
</dbReference>
<dbReference type="GO" id="GO:0005737">
    <property type="term" value="C:cytoplasm"/>
    <property type="evidence" value="ECO:0007669"/>
    <property type="project" value="InterPro"/>
</dbReference>
<dbReference type="GO" id="GO:0005886">
    <property type="term" value="C:plasma membrane"/>
    <property type="evidence" value="ECO:0007669"/>
    <property type="project" value="UniProtKB-SubCell"/>
</dbReference>
<dbReference type="GO" id="GO:0106430">
    <property type="term" value="F:dihydroorotate dehydrogenase (quinone) activity"/>
    <property type="evidence" value="ECO:0007669"/>
    <property type="project" value="UniProtKB-EC"/>
</dbReference>
<dbReference type="GO" id="GO:0006207">
    <property type="term" value="P:'de novo' pyrimidine nucleobase biosynthetic process"/>
    <property type="evidence" value="ECO:0007669"/>
    <property type="project" value="InterPro"/>
</dbReference>
<dbReference type="GO" id="GO:0044205">
    <property type="term" value="P:'de novo' UMP biosynthetic process"/>
    <property type="evidence" value="ECO:0007669"/>
    <property type="project" value="UniProtKB-UniRule"/>
</dbReference>
<dbReference type="CDD" id="cd04738">
    <property type="entry name" value="DHOD_2_like"/>
    <property type="match status" value="1"/>
</dbReference>
<dbReference type="FunFam" id="3.20.20.70:FF:000028">
    <property type="entry name" value="Dihydroorotate dehydrogenase (quinone)"/>
    <property type="match status" value="1"/>
</dbReference>
<dbReference type="Gene3D" id="3.20.20.70">
    <property type="entry name" value="Aldolase class I"/>
    <property type="match status" value="1"/>
</dbReference>
<dbReference type="HAMAP" id="MF_00225">
    <property type="entry name" value="DHO_dh_type2"/>
    <property type="match status" value="1"/>
</dbReference>
<dbReference type="InterPro" id="IPR013785">
    <property type="entry name" value="Aldolase_TIM"/>
</dbReference>
<dbReference type="InterPro" id="IPR050074">
    <property type="entry name" value="DHO_dehydrogenase"/>
</dbReference>
<dbReference type="InterPro" id="IPR012135">
    <property type="entry name" value="Dihydroorotate_DH_1_2"/>
</dbReference>
<dbReference type="InterPro" id="IPR005719">
    <property type="entry name" value="Dihydroorotate_DH_2"/>
</dbReference>
<dbReference type="InterPro" id="IPR005720">
    <property type="entry name" value="Dihydroorotate_DH_cat"/>
</dbReference>
<dbReference type="InterPro" id="IPR001295">
    <property type="entry name" value="Dihydroorotate_DH_CS"/>
</dbReference>
<dbReference type="NCBIfam" id="NF003644">
    <property type="entry name" value="PRK05286.1-1"/>
    <property type="match status" value="1"/>
</dbReference>
<dbReference type="NCBIfam" id="NF003645">
    <property type="entry name" value="PRK05286.1-2"/>
    <property type="match status" value="1"/>
</dbReference>
<dbReference type="NCBIfam" id="NF003646">
    <property type="entry name" value="PRK05286.1-4"/>
    <property type="match status" value="1"/>
</dbReference>
<dbReference type="NCBIfam" id="NF003652">
    <property type="entry name" value="PRK05286.2-5"/>
    <property type="match status" value="1"/>
</dbReference>
<dbReference type="NCBIfam" id="TIGR01036">
    <property type="entry name" value="pyrD_sub2"/>
    <property type="match status" value="1"/>
</dbReference>
<dbReference type="PANTHER" id="PTHR48109:SF4">
    <property type="entry name" value="DIHYDROOROTATE DEHYDROGENASE (QUINONE), MITOCHONDRIAL"/>
    <property type="match status" value="1"/>
</dbReference>
<dbReference type="PANTHER" id="PTHR48109">
    <property type="entry name" value="DIHYDROOROTATE DEHYDROGENASE (QUINONE), MITOCHONDRIAL-RELATED"/>
    <property type="match status" value="1"/>
</dbReference>
<dbReference type="Pfam" id="PF01180">
    <property type="entry name" value="DHO_dh"/>
    <property type="match status" value="1"/>
</dbReference>
<dbReference type="PIRSF" id="PIRSF000164">
    <property type="entry name" value="DHO_oxidase"/>
    <property type="match status" value="1"/>
</dbReference>
<dbReference type="SUPFAM" id="SSF51395">
    <property type="entry name" value="FMN-linked oxidoreductases"/>
    <property type="match status" value="1"/>
</dbReference>
<dbReference type="PROSITE" id="PS00911">
    <property type="entry name" value="DHODEHASE_1"/>
    <property type="match status" value="1"/>
</dbReference>
<dbReference type="PROSITE" id="PS00912">
    <property type="entry name" value="DHODEHASE_2"/>
    <property type="match status" value="1"/>
</dbReference>
<organism>
    <name type="scientific">Nitrosomonas eutropha (strain DSM 101675 / C91 / Nm57)</name>
    <dbReference type="NCBI Taxonomy" id="335283"/>
    <lineage>
        <taxon>Bacteria</taxon>
        <taxon>Pseudomonadati</taxon>
        <taxon>Pseudomonadota</taxon>
        <taxon>Betaproteobacteria</taxon>
        <taxon>Nitrosomonadales</taxon>
        <taxon>Nitrosomonadaceae</taxon>
        <taxon>Nitrosomonas</taxon>
    </lineage>
</organism>
<keyword id="KW-1003">Cell membrane</keyword>
<keyword id="KW-0285">Flavoprotein</keyword>
<keyword id="KW-0288">FMN</keyword>
<keyword id="KW-0472">Membrane</keyword>
<keyword id="KW-0560">Oxidoreductase</keyword>
<keyword id="KW-0665">Pyrimidine biosynthesis</keyword>
<protein>
    <recommendedName>
        <fullName evidence="1">Dihydroorotate dehydrogenase (quinone)</fullName>
        <ecNumber evidence="1">1.3.5.2</ecNumber>
    </recommendedName>
    <alternativeName>
        <fullName evidence="1">DHOdehase</fullName>
        <shortName evidence="1">DHOD</shortName>
        <shortName evidence="1">DHODase</shortName>
    </alternativeName>
    <alternativeName>
        <fullName evidence="1">Dihydroorotate oxidase</fullName>
    </alternativeName>
</protein>
<sequence length="342" mass="36898">MTYTLLRPLLFLLDAETAHTLTLDTLGLLQKTGLLPNRTIYCTPVRAMGLDFPNPVGLAAGLDKNGAYISALARLGFGFIEVGTVTPRPQPGNPRPRLFRVPQAEAITNRMGFNNVGIDKLIENVRQADYQGILGINIGKNADTPLQNAIDDYLICLRKAYPYASYVTVNISSPNTKQLRQLQNETELEQLLGALKTEQTRLSDQHGHYTPLAIKIAPDLESAQIEAIASLLLKHRMDAVIATNTTIARDGLEHLPHGDEPGGLSGAPLTERSTAVIRQLAMHLQQAIPIIGAGGIMSSLDAQAKIKAGASLVQVYSGLIYRGPALVSEITSLLCSRSTYAG</sequence>
<comment type="function">
    <text evidence="1">Catalyzes the conversion of dihydroorotate to orotate with quinone as electron acceptor.</text>
</comment>
<comment type="catalytic activity">
    <reaction evidence="1">
        <text>(S)-dihydroorotate + a quinone = orotate + a quinol</text>
        <dbReference type="Rhea" id="RHEA:30187"/>
        <dbReference type="ChEBI" id="CHEBI:24646"/>
        <dbReference type="ChEBI" id="CHEBI:30839"/>
        <dbReference type="ChEBI" id="CHEBI:30864"/>
        <dbReference type="ChEBI" id="CHEBI:132124"/>
        <dbReference type="EC" id="1.3.5.2"/>
    </reaction>
</comment>
<comment type="cofactor">
    <cofactor evidence="1">
        <name>FMN</name>
        <dbReference type="ChEBI" id="CHEBI:58210"/>
    </cofactor>
    <text evidence="1">Binds 1 FMN per subunit.</text>
</comment>
<comment type="pathway">
    <text evidence="1">Pyrimidine metabolism; UMP biosynthesis via de novo pathway; orotate from (S)-dihydroorotate (quinone route): step 1/1.</text>
</comment>
<comment type="subunit">
    <text evidence="1">Monomer.</text>
</comment>
<comment type="subcellular location">
    <subcellularLocation>
        <location evidence="1">Cell membrane</location>
        <topology evidence="1">Peripheral membrane protein</topology>
    </subcellularLocation>
</comment>
<comment type="similarity">
    <text evidence="1">Belongs to the dihydroorotate dehydrogenase family. Type 2 subfamily.</text>
</comment>
<evidence type="ECO:0000255" key="1">
    <source>
        <dbReference type="HAMAP-Rule" id="MF_00225"/>
    </source>
</evidence>
<proteinExistence type="inferred from homology"/>